<evidence type="ECO:0000255" key="1">
    <source>
        <dbReference type="HAMAP-Rule" id="MF_01440"/>
    </source>
</evidence>
<accession>Q8EF62</accession>
<dbReference type="EC" id="3.5.1.44" evidence="1"/>
<dbReference type="EMBL" id="AE014299">
    <property type="protein sequence ID" value="AAN55172.2"/>
    <property type="molecule type" value="Genomic_DNA"/>
</dbReference>
<dbReference type="RefSeq" id="NP_717728.2">
    <property type="nucleotide sequence ID" value="NC_004347.2"/>
</dbReference>
<dbReference type="RefSeq" id="WP_011072188.1">
    <property type="nucleotide sequence ID" value="NC_004347.2"/>
</dbReference>
<dbReference type="SMR" id="Q8EF62"/>
<dbReference type="STRING" id="211586.SO_2125"/>
<dbReference type="PaxDb" id="211586-SO_2125"/>
<dbReference type="KEGG" id="son:SO_2125"/>
<dbReference type="PATRIC" id="fig|211586.12.peg.2041"/>
<dbReference type="eggNOG" id="COG1871">
    <property type="taxonomic scope" value="Bacteria"/>
</dbReference>
<dbReference type="HOGENOM" id="CLU_087854_0_0_6"/>
<dbReference type="OrthoDB" id="9807202at2"/>
<dbReference type="PhylomeDB" id="Q8EF62"/>
<dbReference type="BioCyc" id="SONE211586:G1GMP-1955-MONOMER"/>
<dbReference type="Proteomes" id="UP000008186">
    <property type="component" value="Chromosome"/>
</dbReference>
<dbReference type="GO" id="GO:0050568">
    <property type="term" value="F:protein-glutamine glutaminase activity"/>
    <property type="evidence" value="ECO:0007669"/>
    <property type="project" value="UniProtKB-UniRule"/>
</dbReference>
<dbReference type="GO" id="GO:0006935">
    <property type="term" value="P:chemotaxis"/>
    <property type="evidence" value="ECO:0007669"/>
    <property type="project" value="UniProtKB-UniRule"/>
</dbReference>
<dbReference type="CDD" id="cd16352">
    <property type="entry name" value="CheD"/>
    <property type="match status" value="1"/>
</dbReference>
<dbReference type="Gene3D" id="3.30.1330.200">
    <property type="match status" value="1"/>
</dbReference>
<dbReference type="HAMAP" id="MF_01440">
    <property type="entry name" value="CheD"/>
    <property type="match status" value="1"/>
</dbReference>
<dbReference type="InterPro" id="IPR038592">
    <property type="entry name" value="CheD-like_sf"/>
</dbReference>
<dbReference type="InterPro" id="IPR005659">
    <property type="entry name" value="Chemorcpt_Glu_NH3ase_CheD"/>
</dbReference>
<dbReference type="InterPro" id="IPR011324">
    <property type="entry name" value="Cytotoxic_necrot_fac-like_cat"/>
</dbReference>
<dbReference type="NCBIfam" id="NF010013">
    <property type="entry name" value="PRK13487.1"/>
    <property type="match status" value="1"/>
</dbReference>
<dbReference type="PANTHER" id="PTHR35147">
    <property type="entry name" value="CHEMORECEPTOR GLUTAMINE DEAMIDASE CHED-RELATED"/>
    <property type="match status" value="1"/>
</dbReference>
<dbReference type="PANTHER" id="PTHR35147:SF2">
    <property type="entry name" value="CHEMORECEPTOR GLUTAMINE DEAMIDASE CHED-RELATED"/>
    <property type="match status" value="1"/>
</dbReference>
<dbReference type="Pfam" id="PF03975">
    <property type="entry name" value="CheD"/>
    <property type="match status" value="1"/>
</dbReference>
<dbReference type="SUPFAM" id="SSF64438">
    <property type="entry name" value="CNF1/YfiH-like putative cysteine hydrolases"/>
    <property type="match status" value="1"/>
</dbReference>
<proteinExistence type="inferred from homology"/>
<feature type="chain" id="PRO_0000251064" description="Probable chemoreceptor glutamine deamidase CheD 1">
    <location>
        <begin position="1"/>
        <end position="206"/>
    </location>
</feature>
<gene>
    <name evidence="1" type="primary">cheD1</name>
    <name type="synonym">cheD-1</name>
    <name type="ordered locus">SO_2125</name>
</gene>
<name>CHED1_SHEON</name>
<comment type="function">
    <text evidence="1">Probably deamidates glutamine residues to glutamate on methyl-accepting chemotaxis receptors (MCPs), playing an important role in chemotaxis.</text>
</comment>
<comment type="catalytic activity">
    <reaction evidence="1">
        <text>L-glutaminyl-[protein] + H2O = L-glutamyl-[protein] + NH4(+)</text>
        <dbReference type="Rhea" id="RHEA:16441"/>
        <dbReference type="Rhea" id="RHEA-COMP:10207"/>
        <dbReference type="Rhea" id="RHEA-COMP:10208"/>
        <dbReference type="ChEBI" id="CHEBI:15377"/>
        <dbReference type="ChEBI" id="CHEBI:28938"/>
        <dbReference type="ChEBI" id="CHEBI:29973"/>
        <dbReference type="ChEBI" id="CHEBI:30011"/>
        <dbReference type="EC" id="3.5.1.44"/>
    </reaction>
</comment>
<comment type="similarity">
    <text evidence="1">Belongs to the CheD family.</text>
</comment>
<sequence>MVKPSLEFALNEPNRYYDRHFERSAVKILPGEYFATRENTMIVTVLGSCVAVCLYDPVLKIGGMNHFLLPNDNVTAPNMMTESARYGVFAMELLINHVLKLGARRNALEAKVFGGGNVLRGLTVQNIGERNAEFVLDYLQMEQIPVIAADLLDIYPRKVYFFPETGLVKVRKIKTIHNSTIMDRESEYRLRIKNLPSGGDVELFGE</sequence>
<keyword id="KW-0145">Chemotaxis</keyword>
<keyword id="KW-0378">Hydrolase</keyword>
<keyword id="KW-1185">Reference proteome</keyword>
<reference key="1">
    <citation type="journal article" date="2002" name="Nat. Biotechnol.">
        <title>Genome sequence of the dissimilatory metal ion-reducing bacterium Shewanella oneidensis.</title>
        <authorList>
            <person name="Heidelberg J.F."/>
            <person name="Paulsen I.T."/>
            <person name="Nelson K.E."/>
            <person name="Gaidos E.J."/>
            <person name="Nelson W.C."/>
            <person name="Read T.D."/>
            <person name="Eisen J.A."/>
            <person name="Seshadri R."/>
            <person name="Ward N.L."/>
            <person name="Methe B.A."/>
            <person name="Clayton R.A."/>
            <person name="Meyer T."/>
            <person name="Tsapin A."/>
            <person name="Scott J."/>
            <person name="Beanan M.J."/>
            <person name="Brinkac L.M."/>
            <person name="Daugherty S.C."/>
            <person name="DeBoy R.T."/>
            <person name="Dodson R.J."/>
            <person name="Durkin A.S."/>
            <person name="Haft D.H."/>
            <person name="Kolonay J.F."/>
            <person name="Madupu R."/>
            <person name="Peterson J.D."/>
            <person name="Umayam L.A."/>
            <person name="White O."/>
            <person name="Wolf A.M."/>
            <person name="Vamathevan J.J."/>
            <person name="Weidman J.F."/>
            <person name="Impraim M."/>
            <person name="Lee K."/>
            <person name="Berry K.J."/>
            <person name="Lee C."/>
            <person name="Mueller J."/>
            <person name="Khouri H.M."/>
            <person name="Gill J."/>
            <person name="Utterback T.R."/>
            <person name="McDonald L.A."/>
            <person name="Feldblyum T.V."/>
            <person name="Smith H.O."/>
            <person name="Venter J.C."/>
            <person name="Nealson K.H."/>
            <person name="Fraser C.M."/>
        </authorList>
    </citation>
    <scope>NUCLEOTIDE SEQUENCE [LARGE SCALE GENOMIC DNA]</scope>
    <source>
        <strain>ATCC 700550 / JCM 31522 / CIP 106686 / LMG 19005 / NCIMB 14063 / MR-1</strain>
    </source>
</reference>
<organism>
    <name type="scientific">Shewanella oneidensis (strain ATCC 700550 / JCM 31522 / CIP 106686 / LMG 19005 / NCIMB 14063 / MR-1)</name>
    <dbReference type="NCBI Taxonomy" id="211586"/>
    <lineage>
        <taxon>Bacteria</taxon>
        <taxon>Pseudomonadati</taxon>
        <taxon>Pseudomonadota</taxon>
        <taxon>Gammaproteobacteria</taxon>
        <taxon>Alteromonadales</taxon>
        <taxon>Shewanellaceae</taxon>
        <taxon>Shewanella</taxon>
    </lineage>
</organism>
<protein>
    <recommendedName>
        <fullName evidence="1">Probable chemoreceptor glutamine deamidase CheD 1</fullName>
        <ecNumber evidence="1">3.5.1.44</ecNumber>
    </recommendedName>
</protein>